<organism>
    <name type="scientific">Solibacter usitatus (strain Ellin6076)</name>
    <dbReference type="NCBI Taxonomy" id="234267"/>
    <lineage>
        <taxon>Bacteria</taxon>
        <taxon>Pseudomonadati</taxon>
        <taxon>Acidobacteriota</taxon>
        <taxon>Terriglobia</taxon>
        <taxon>Bryobacterales</taxon>
        <taxon>Solibacteraceae</taxon>
        <taxon>Candidatus Solibacter</taxon>
    </lineage>
</organism>
<reference key="1">
    <citation type="journal article" date="2009" name="Appl. Environ. Microbiol.">
        <title>Three genomes from the phylum Acidobacteria provide insight into the lifestyles of these microorganisms in soils.</title>
        <authorList>
            <person name="Ward N.L."/>
            <person name="Challacombe J.F."/>
            <person name="Janssen P.H."/>
            <person name="Henrissat B."/>
            <person name="Coutinho P.M."/>
            <person name="Wu M."/>
            <person name="Xie G."/>
            <person name="Haft D.H."/>
            <person name="Sait M."/>
            <person name="Badger J."/>
            <person name="Barabote R.D."/>
            <person name="Bradley B."/>
            <person name="Brettin T.S."/>
            <person name="Brinkac L.M."/>
            <person name="Bruce D."/>
            <person name="Creasy T."/>
            <person name="Daugherty S.C."/>
            <person name="Davidsen T.M."/>
            <person name="DeBoy R.T."/>
            <person name="Detter J.C."/>
            <person name="Dodson R.J."/>
            <person name="Durkin A.S."/>
            <person name="Ganapathy A."/>
            <person name="Gwinn-Giglio M."/>
            <person name="Han C.S."/>
            <person name="Khouri H."/>
            <person name="Kiss H."/>
            <person name="Kothari S.P."/>
            <person name="Madupu R."/>
            <person name="Nelson K.E."/>
            <person name="Nelson W.C."/>
            <person name="Paulsen I."/>
            <person name="Penn K."/>
            <person name="Ren Q."/>
            <person name="Rosovitz M.J."/>
            <person name="Selengut J.D."/>
            <person name="Shrivastava S."/>
            <person name="Sullivan S.A."/>
            <person name="Tapia R."/>
            <person name="Thompson L.S."/>
            <person name="Watkins K.L."/>
            <person name="Yang Q."/>
            <person name="Yu C."/>
            <person name="Zafar N."/>
            <person name="Zhou L."/>
            <person name="Kuske C.R."/>
        </authorList>
    </citation>
    <scope>NUCLEOTIDE SEQUENCE [LARGE SCALE GENOMIC DNA]</scope>
    <source>
        <strain>Ellin6076</strain>
    </source>
</reference>
<dbReference type="EC" id="3.6.5.-" evidence="1"/>
<dbReference type="EMBL" id="CP000473">
    <property type="protein sequence ID" value="ABJ84137.1"/>
    <property type="molecule type" value="Genomic_DNA"/>
</dbReference>
<dbReference type="SMR" id="Q022G3"/>
<dbReference type="FunCoup" id="Q022G3">
    <property type="interactions" value="605"/>
</dbReference>
<dbReference type="STRING" id="234267.Acid_3160"/>
<dbReference type="KEGG" id="sus:Acid_3160"/>
<dbReference type="eggNOG" id="COG0536">
    <property type="taxonomic scope" value="Bacteria"/>
</dbReference>
<dbReference type="HOGENOM" id="CLU_011747_2_3_0"/>
<dbReference type="InParanoid" id="Q022G3"/>
<dbReference type="OrthoDB" id="9807318at2"/>
<dbReference type="GO" id="GO:0005737">
    <property type="term" value="C:cytoplasm"/>
    <property type="evidence" value="ECO:0007669"/>
    <property type="project" value="UniProtKB-SubCell"/>
</dbReference>
<dbReference type="GO" id="GO:0005525">
    <property type="term" value="F:GTP binding"/>
    <property type="evidence" value="ECO:0007669"/>
    <property type="project" value="UniProtKB-UniRule"/>
</dbReference>
<dbReference type="GO" id="GO:0003924">
    <property type="term" value="F:GTPase activity"/>
    <property type="evidence" value="ECO:0007669"/>
    <property type="project" value="UniProtKB-UniRule"/>
</dbReference>
<dbReference type="GO" id="GO:0000287">
    <property type="term" value="F:magnesium ion binding"/>
    <property type="evidence" value="ECO:0007669"/>
    <property type="project" value="InterPro"/>
</dbReference>
<dbReference type="GO" id="GO:0042254">
    <property type="term" value="P:ribosome biogenesis"/>
    <property type="evidence" value="ECO:0007669"/>
    <property type="project" value="UniProtKB-UniRule"/>
</dbReference>
<dbReference type="CDD" id="cd01898">
    <property type="entry name" value="Obg"/>
    <property type="match status" value="1"/>
</dbReference>
<dbReference type="FunFam" id="2.70.210.12:FF:000001">
    <property type="entry name" value="GTPase Obg"/>
    <property type="match status" value="1"/>
</dbReference>
<dbReference type="Gene3D" id="2.70.210.12">
    <property type="entry name" value="GTP1/OBG domain"/>
    <property type="match status" value="1"/>
</dbReference>
<dbReference type="Gene3D" id="3.40.50.300">
    <property type="entry name" value="P-loop containing nucleotide triphosphate hydrolases"/>
    <property type="match status" value="1"/>
</dbReference>
<dbReference type="HAMAP" id="MF_01454">
    <property type="entry name" value="GTPase_Obg"/>
    <property type="match status" value="1"/>
</dbReference>
<dbReference type="InterPro" id="IPR031167">
    <property type="entry name" value="G_OBG"/>
</dbReference>
<dbReference type="InterPro" id="IPR006073">
    <property type="entry name" value="GTP-bd"/>
</dbReference>
<dbReference type="InterPro" id="IPR014100">
    <property type="entry name" value="GTP-bd_Obg/CgtA"/>
</dbReference>
<dbReference type="InterPro" id="IPR006074">
    <property type="entry name" value="GTP1-OBG_CS"/>
</dbReference>
<dbReference type="InterPro" id="IPR006169">
    <property type="entry name" value="GTP1_OBG_dom"/>
</dbReference>
<dbReference type="InterPro" id="IPR036726">
    <property type="entry name" value="GTP1_OBG_dom_sf"/>
</dbReference>
<dbReference type="InterPro" id="IPR045086">
    <property type="entry name" value="OBG_GTPase"/>
</dbReference>
<dbReference type="InterPro" id="IPR027417">
    <property type="entry name" value="P-loop_NTPase"/>
</dbReference>
<dbReference type="InterPro" id="IPR005225">
    <property type="entry name" value="Small_GTP-bd"/>
</dbReference>
<dbReference type="NCBIfam" id="TIGR02729">
    <property type="entry name" value="Obg_CgtA"/>
    <property type="match status" value="1"/>
</dbReference>
<dbReference type="NCBIfam" id="NF008954">
    <property type="entry name" value="PRK12296.1"/>
    <property type="match status" value="1"/>
</dbReference>
<dbReference type="NCBIfam" id="NF008955">
    <property type="entry name" value="PRK12297.1"/>
    <property type="match status" value="1"/>
</dbReference>
<dbReference type="NCBIfam" id="NF008956">
    <property type="entry name" value="PRK12299.1"/>
    <property type="match status" value="1"/>
</dbReference>
<dbReference type="NCBIfam" id="TIGR00231">
    <property type="entry name" value="small_GTP"/>
    <property type="match status" value="1"/>
</dbReference>
<dbReference type="PANTHER" id="PTHR11702">
    <property type="entry name" value="DEVELOPMENTALLY REGULATED GTP-BINDING PROTEIN-RELATED"/>
    <property type="match status" value="1"/>
</dbReference>
<dbReference type="PANTHER" id="PTHR11702:SF31">
    <property type="entry name" value="MITOCHONDRIAL RIBOSOME-ASSOCIATED GTPASE 2"/>
    <property type="match status" value="1"/>
</dbReference>
<dbReference type="Pfam" id="PF01018">
    <property type="entry name" value="GTP1_OBG"/>
    <property type="match status" value="1"/>
</dbReference>
<dbReference type="Pfam" id="PF01926">
    <property type="entry name" value="MMR_HSR1"/>
    <property type="match status" value="1"/>
</dbReference>
<dbReference type="PIRSF" id="PIRSF002401">
    <property type="entry name" value="GTP_bd_Obg/CgtA"/>
    <property type="match status" value="1"/>
</dbReference>
<dbReference type="PRINTS" id="PR00326">
    <property type="entry name" value="GTP1OBG"/>
</dbReference>
<dbReference type="SUPFAM" id="SSF82051">
    <property type="entry name" value="Obg GTP-binding protein N-terminal domain"/>
    <property type="match status" value="1"/>
</dbReference>
<dbReference type="SUPFAM" id="SSF52540">
    <property type="entry name" value="P-loop containing nucleoside triphosphate hydrolases"/>
    <property type="match status" value="1"/>
</dbReference>
<dbReference type="PROSITE" id="PS51710">
    <property type="entry name" value="G_OBG"/>
    <property type="match status" value="1"/>
</dbReference>
<dbReference type="PROSITE" id="PS00905">
    <property type="entry name" value="GTP1_OBG"/>
    <property type="match status" value="1"/>
</dbReference>
<dbReference type="PROSITE" id="PS51883">
    <property type="entry name" value="OBG"/>
    <property type="match status" value="1"/>
</dbReference>
<proteinExistence type="inferred from homology"/>
<accession>Q022G3</accession>
<keyword id="KW-0963">Cytoplasm</keyword>
<keyword id="KW-0342">GTP-binding</keyword>
<keyword id="KW-0378">Hydrolase</keyword>
<keyword id="KW-0460">Magnesium</keyword>
<keyword id="KW-0479">Metal-binding</keyword>
<keyword id="KW-0547">Nucleotide-binding</keyword>
<sequence>MFIDEVRILVKAGDGGNGCLAFRREKFVPRGGPSGGDGGRGGDVTLVCSEHANTLLQFRFNPEHKAERGRHGEGSQRTGAEGRSIDVAVPVGTVVYDEATGERLYDFTVPGERFVVARGGRGGRGNQHFATPTHQAPTEHEPGRPGEEKRLRLELKLLADVGLVGFPNAGKSTLISRISAAKPKIAAYPFTTLEPNLGVVQMEGFRSFVVADIPGIIEGAHEGHGLGIQFLRHIERTRLLAHLVDVSEESGRDPVQDFEIIMQELARFSDQLVAKPMIVVATKMDVAQDPARVEALRDLAKSRDLPFFEISSATGQGIDALKHAMADRVLAPVPVPE</sequence>
<feature type="chain" id="PRO_0000386264" description="GTPase Obg">
    <location>
        <begin position="1"/>
        <end position="337"/>
    </location>
</feature>
<feature type="domain" description="Obg" evidence="2">
    <location>
        <begin position="1"/>
        <end position="158"/>
    </location>
</feature>
<feature type="domain" description="OBG-type G" evidence="1">
    <location>
        <begin position="159"/>
        <end position="330"/>
    </location>
</feature>
<feature type="region of interest" description="Disordered" evidence="3">
    <location>
        <begin position="61"/>
        <end position="83"/>
    </location>
</feature>
<feature type="region of interest" description="Disordered" evidence="3">
    <location>
        <begin position="119"/>
        <end position="146"/>
    </location>
</feature>
<feature type="compositionally biased region" description="Basic and acidic residues" evidence="3">
    <location>
        <begin position="61"/>
        <end position="74"/>
    </location>
</feature>
<feature type="compositionally biased region" description="Basic and acidic residues" evidence="3">
    <location>
        <begin position="137"/>
        <end position="146"/>
    </location>
</feature>
<feature type="binding site" evidence="1">
    <location>
        <begin position="165"/>
        <end position="172"/>
    </location>
    <ligand>
        <name>GTP</name>
        <dbReference type="ChEBI" id="CHEBI:37565"/>
    </ligand>
</feature>
<feature type="binding site" evidence="1">
    <location>
        <position position="172"/>
    </location>
    <ligand>
        <name>Mg(2+)</name>
        <dbReference type="ChEBI" id="CHEBI:18420"/>
    </ligand>
</feature>
<feature type="binding site" evidence="1">
    <location>
        <begin position="190"/>
        <end position="194"/>
    </location>
    <ligand>
        <name>GTP</name>
        <dbReference type="ChEBI" id="CHEBI:37565"/>
    </ligand>
</feature>
<feature type="binding site" evidence="1">
    <location>
        <position position="192"/>
    </location>
    <ligand>
        <name>Mg(2+)</name>
        <dbReference type="ChEBI" id="CHEBI:18420"/>
    </ligand>
</feature>
<feature type="binding site" evidence="1">
    <location>
        <begin position="212"/>
        <end position="215"/>
    </location>
    <ligand>
        <name>GTP</name>
        <dbReference type="ChEBI" id="CHEBI:37565"/>
    </ligand>
</feature>
<feature type="binding site" evidence="1">
    <location>
        <begin position="282"/>
        <end position="285"/>
    </location>
    <ligand>
        <name>GTP</name>
        <dbReference type="ChEBI" id="CHEBI:37565"/>
    </ligand>
</feature>
<feature type="binding site" evidence="1">
    <location>
        <begin position="311"/>
        <end position="313"/>
    </location>
    <ligand>
        <name>GTP</name>
        <dbReference type="ChEBI" id="CHEBI:37565"/>
    </ligand>
</feature>
<evidence type="ECO:0000255" key="1">
    <source>
        <dbReference type="HAMAP-Rule" id="MF_01454"/>
    </source>
</evidence>
<evidence type="ECO:0000255" key="2">
    <source>
        <dbReference type="PROSITE-ProRule" id="PRU01231"/>
    </source>
</evidence>
<evidence type="ECO:0000256" key="3">
    <source>
        <dbReference type="SAM" id="MobiDB-lite"/>
    </source>
</evidence>
<comment type="function">
    <text evidence="1">An essential GTPase which binds GTP, GDP and possibly (p)ppGpp with moderate affinity, with high nucleotide exchange rates and a fairly low GTP hydrolysis rate. Plays a role in control of the cell cycle, stress response, ribosome biogenesis and in those bacteria that undergo differentiation, in morphogenesis control.</text>
</comment>
<comment type="cofactor">
    <cofactor evidence="1">
        <name>Mg(2+)</name>
        <dbReference type="ChEBI" id="CHEBI:18420"/>
    </cofactor>
</comment>
<comment type="subunit">
    <text evidence="1">Monomer.</text>
</comment>
<comment type="subcellular location">
    <subcellularLocation>
        <location evidence="1">Cytoplasm</location>
    </subcellularLocation>
</comment>
<comment type="similarity">
    <text evidence="1">Belongs to the TRAFAC class OBG-HflX-like GTPase superfamily. OBG GTPase family.</text>
</comment>
<gene>
    <name evidence="1" type="primary">obg</name>
    <name type="ordered locus">Acid_3160</name>
</gene>
<name>OBG_SOLUE</name>
<protein>
    <recommendedName>
        <fullName evidence="1">GTPase Obg</fullName>
        <ecNumber evidence="1">3.6.5.-</ecNumber>
    </recommendedName>
    <alternativeName>
        <fullName evidence="1">GTP-binding protein Obg</fullName>
    </alternativeName>
</protein>